<name>RPOB_PSYWF</name>
<gene>
    <name evidence="1" type="primary">rpoB</name>
    <name type="ordered locus">PsycPRwf_2036</name>
</gene>
<sequence>MAYSYTEKKRIRKSFAELPHVMDIPYLLAIQVDSYEQFLQENKKPKARENTGLQAAFSSIFPIESNSNNAELQFVEYYLGAPEFDERECISRGSTFAAPLRVKIRLVIKDKDSKDKNSKAAIKDIREQNVYMGEIPLMTDNGTFIINGTERVIVSQLHRSPGVFFDHDKGKSHSSGKVLYNARIIPYRGSWLDFEFDAKDLVFARIDRRRKLLGTIILRALGMDTNEILDTFFEKVSVYKGEEQFEIDLVADRLRGEMAQFDIVSPDGEVLVEQGKRINARRIRQIEQSGMKKLAVPDEYLYERILAEDIVVNDEVIAKANTLIDHELLVKLSAFEASESIKEFKILFTNDIDHGTYIADTLRADSTGSREEALIEIYKVMRPGEPPTIDTAEKLFESMFFNADRYDLSNVGRMKFNRRLGRTFENTDDPDIKREQSVLTKDDIIDVLKELINIRNGIGEVDDIDHLGNRRIRSVGEMAENQFRVGLVRVERAVKERLSSAESDNLSPQDLINSKPVAAAVKEFFGSSQLSQFMDQNNPLSEITHKRRISALGPGGLTRERAGFEVRDVHNTHYGRVCPIETPEGPNIGLINSLATFAKTNEFGFLETPYRKVVDGKVTDDIEYLSAIEEVGTVIAQADSELDENGVLAEEMVMVRSGGESVRMPSDKVTHMDVSPSQVVSVAASLIPFLEHDDANRALMGSNMQRQAVPTLRADKPLVGTGMERHVARDSGVCVIARRGGVIEDVDASRIVVRVNEDEMQAGEAGIDIYNLIKYTRSNQNTCINQRIIVNQGDEIAGGDILADGPSTDLGELALGQNMRVAFMPWNGYNFEDSILLSERVVKEDRFTTIHIQELTCVARDTKLGTEEITADIPNVGEAALSALDESGIVYIGAEVDAGDILVGKVTPKGETQLTPEEKLLRAIFGEKAADVKDTSLRVPTSTKGTVIDVQVFTRDGVEKDARAKSIEKSQLDNYRKDLKEELRIFEEAARSRISHLLDGQAISGGAGLKSGTVLAESELLEMSLETLLDIQPVEEEIAERLTQIQEFLVDKQKDIDTKFAEKKRKLTAGDDLAHGVQKIVKVYLAVKRRIQPGDKMAGRHGNKGVVSRIMPVEDMPYDENGNPVDIVLNPLGVPSRMNIGQVLETHLGMAAKGLGDKINGMIKAQAAVTELREFLDKIYNKVGGEQVDLDSLSDDDIRALAQNLRDGVPMGTAVFDGAREVQIDELLELAGYPSSGQQTLYDGRTGQKFDRPVTVGYMYMLKLNHLVDDKMHARSTGSYSLVTQQPLGGKAQFGGQRFGEMEVWALEAYGATYTLQEMLTVKSDDVEGRTRMYKNIVDGEQYMDPGMPESFNVLTKEIKSLGINIELKESN</sequence>
<proteinExistence type="inferred from homology"/>
<accession>A5WH35</accession>
<evidence type="ECO:0000255" key="1">
    <source>
        <dbReference type="HAMAP-Rule" id="MF_01321"/>
    </source>
</evidence>
<keyword id="KW-0240">DNA-directed RNA polymerase</keyword>
<keyword id="KW-0548">Nucleotidyltransferase</keyword>
<keyword id="KW-0804">Transcription</keyword>
<keyword id="KW-0808">Transferase</keyword>
<feature type="chain" id="PRO_1000073240" description="DNA-directed RNA polymerase subunit beta">
    <location>
        <begin position="1"/>
        <end position="1372"/>
    </location>
</feature>
<protein>
    <recommendedName>
        <fullName evidence="1">DNA-directed RNA polymerase subunit beta</fullName>
        <shortName evidence="1">RNAP subunit beta</shortName>
        <ecNumber evidence="1">2.7.7.6</ecNumber>
    </recommendedName>
    <alternativeName>
        <fullName evidence="1">RNA polymerase subunit beta</fullName>
    </alternativeName>
    <alternativeName>
        <fullName evidence="1">Transcriptase subunit beta</fullName>
    </alternativeName>
</protein>
<dbReference type="EC" id="2.7.7.6" evidence="1"/>
<dbReference type="EMBL" id="CP000713">
    <property type="protein sequence ID" value="ABQ94976.1"/>
    <property type="molecule type" value="Genomic_DNA"/>
</dbReference>
<dbReference type="SMR" id="A5WH35"/>
<dbReference type="STRING" id="349106.PsycPRwf_2036"/>
<dbReference type="KEGG" id="prw:PsycPRwf_2036"/>
<dbReference type="eggNOG" id="COG0085">
    <property type="taxonomic scope" value="Bacteria"/>
</dbReference>
<dbReference type="HOGENOM" id="CLU_000524_4_3_6"/>
<dbReference type="GO" id="GO:0000428">
    <property type="term" value="C:DNA-directed RNA polymerase complex"/>
    <property type="evidence" value="ECO:0007669"/>
    <property type="project" value="UniProtKB-KW"/>
</dbReference>
<dbReference type="GO" id="GO:0003677">
    <property type="term" value="F:DNA binding"/>
    <property type="evidence" value="ECO:0007669"/>
    <property type="project" value="UniProtKB-UniRule"/>
</dbReference>
<dbReference type="GO" id="GO:0003899">
    <property type="term" value="F:DNA-directed RNA polymerase activity"/>
    <property type="evidence" value="ECO:0007669"/>
    <property type="project" value="UniProtKB-UniRule"/>
</dbReference>
<dbReference type="GO" id="GO:0032549">
    <property type="term" value="F:ribonucleoside binding"/>
    <property type="evidence" value="ECO:0007669"/>
    <property type="project" value="InterPro"/>
</dbReference>
<dbReference type="GO" id="GO:0006351">
    <property type="term" value="P:DNA-templated transcription"/>
    <property type="evidence" value="ECO:0007669"/>
    <property type="project" value="UniProtKB-UniRule"/>
</dbReference>
<dbReference type="CDD" id="cd00653">
    <property type="entry name" value="RNA_pol_B_RPB2"/>
    <property type="match status" value="1"/>
</dbReference>
<dbReference type="FunFam" id="2.40.270.10:FF:000003">
    <property type="entry name" value="DNA-directed RNA polymerase subunit beta"/>
    <property type="match status" value="1"/>
</dbReference>
<dbReference type="FunFam" id="2.40.50.100:FF:000006">
    <property type="entry name" value="DNA-directed RNA polymerase subunit beta"/>
    <property type="match status" value="1"/>
</dbReference>
<dbReference type="FunFam" id="2.40.50.150:FF:000001">
    <property type="entry name" value="DNA-directed RNA polymerase subunit beta"/>
    <property type="match status" value="1"/>
</dbReference>
<dbReference type="FunFam" id="3.90.1110.10:FF:000001">
    <property type="entry name" value="DNA-directed RNA polymerase subunit beta"/>
    <property type="match status" value="1"/>
</dbReference>
<dbReference type="FunFam" id="3.90.1800.10:FF:000001">
    <property type="entry name" value="DNA-directed RNA polymerase subunit beta"/>
    <property type="match status" value="1"/>
</dbReference>
<dbReference type="Gene3D" id="2.40.50.100">
    <property type="match status" value="1"/>
</dbReference>
<dbReference type="Gene3D" id="2.40.50.150">
    <property type="match status" value="1"/>
</dbReference>
<dbReference type="Gene3D" id="3.90.1100.10">
    <property type="match status" value="2"/>
</dbReference>
<dbReference type="Gene3D" id="2.30.150.10">
    <property type="entry name" value="DNA-directed RNA polymerase, beta subunit, external 1 domain"/>
    <property type="match status" value="1"/>
</dbReference>
<dbReference type="Gene3D" id="2.40.270.10">
    <property type="entry name" value="DNA-directed RNA polymerase, subunit 2, domain 6"/>
    <property type="match status" value="1"/>
</dbReference>
<dbReference type="Gene3D" id="3.90.1800.10">
    <property type="entry name" value="RNA polymerase alpha subunit dimerisation domain"/>
    <property type="match status" value="1"/>
</dbReference>
<dbReference type="Gene3D" id="3.90.1110.10">
    <property type="entry name" value="RNA polymerase Rpb2, domain 2"/>
    <property type="match status" value="1"/>
</dbReference>
<dbReference type="HAMAP" id="MF_01321">
    <property type="entry name" value="RNApol_bact_RpoB"/>
    <property type="match status" value="1"/>
</dbReference>
<dbReference type="InterPro" id="IPR042107">
    <property type="entry name" value="DNA-dir_RNA_pol_bsu_ext_1_sf"/>
</dbReference>
<dbReference type="InterPro" id="IPR019462">
    <property type="entry name" value="DNA-dir_RNA_pol_bsu_external_1"/>
</dbReference>
<dbReference type="InterPro" id="IPR015712">
    <property type="entry name" value="DNA-dir_RNA_pol_su2"/>
</dbReference>
<dbReference type="InterPro" id="IPR007120">
    <property type="entry name" value="DNA-dir_RNAP_su2_dom"/>
</dbReference>
<dbReference type="InterPro" id="IPR037033">
    <property type="entry name" value="DNA-dir_RNAP_su2_hyb_sf"/>
</dbReference>
<dbReference type="InterPro" id="IPR010243">
    <property type="entry name" value="RNA_pol_bsu_bac"/>
</dbReference>
<dbReference type="InterPro" id="IPR007121">
    <property type="entry name" value="RNA_pol_bsu_CS"/>
</dbReference>
<dbReference type="InterPro" id="IPR007644">
    <property type="entry name" value="RNA_pol_bsu_protrusion"/>
</dbReference>
<dbReference type="InterPro" id="IPR007642">
    <property type="entry name" value="RNA_pol_Rpb2_2"/>
</dbReference>
<dbReference type="InterPro" id="IPR037034">
    <property type="entry name" value="RNA_pol_Rpb2_2_sf"/>
</dbReference>
<dbReference type="InterPro" id="IPR007645">
    <property type="entry name" value="RNA_pol_Rpb2_3"/>
</dbReference>
<dbReference type="InterPro" id="IPR007641">
    <property type="entry name" value="RNA_pol_Rpb2_7"/>
</dbReference>
<dbReference type="InterPro" id="IPR014724">
    <property type="entry name" value="RNA_pol_RPB2_OB-fold"/>
</dbReference>
<dbReference type="NCBIfam" id="NF001616">
    <property type="entry name" value="PRK00405.1"/>
    <property type="match status" value="1"/>
</dbReference>
<dbReference type="NCBIfam" id="TIGR02013">
    <property type="entry name" value="rpoB"/>
    <property type="match status" value="1"/>
</dbReference>
<dbReference type="PANTHER" id="PTHR20856">
    <property type="entry name" value="DNA-DIRECTED RNA POLYMERASE I SUBUNIT 2"/>
    <property type="match status" value="1"/>
</dbReference>
<dbReference type="Pfam" id="PF04563">
    <property type="entry name" value="RNA_pol_Rpb2_1"/>
    <property type="match status" value="1"/>
</dbReference>
<dbReference type="Pfam" id="PF04561">
    <property type="entry name" value="RNA_pol_Rpb2_2"/>
    <property type="match status" value="2"/>
</dbReference>
<dbReference type="Pfam" id="PF04565">
    <property type="entry name" value="RNA_pol_Rpb2_3"/>
    <property type="match status" value="1"/>
</dbReference>
<dbReference type="Pfam" id="PF10385">
    <property type="entry name" value="RNA_pol_Rpb2_45"/>
    <property type="match status" value="1"/>
</dbReference>
<dbReference type="Pfam" id="PF00562">
    <property type="entry name" value="RNA_pol_Rpb2_6"/>
    <property type="match status" value="1"/>
</dbReference>
<dbReference type="Pfam" id="PF04560">
    <property type="entry name" value="RNA_pol_Rpb2_7"/>
    <property type="match status" value="1"/>
</dbReference>
<dbReference type="SUPFAM" id="SSF64484">
    <property type="entry name" value="beta and beta-prime subunits of DNA dependent RNA-polymerase"/>
    <property type="match status" value="1"/>
</dbReference>
<dbReference type="PROSITE" id="PS01166">
    <property type="entry name" value="RNA_POL_BETA"/>
    <property type="match status" value="1"/>
</dbReference>
<reference key="1">
    <citation type="submission" date="2007-05" db="EMBL/GenBank/DDBJ databases">
        <title>Complete sequence of chromosome of Psychrobacter sp. PRwf-1.</title>
        <authorList>
            <consortium name="US DOE Joint Genome Institute"/>
            <person name="Copeland A."/>
            <person name="Lucas S."/>
            <person name="Lapidus A."/>
            <person name="Barry K."/>
            <person name="Detter J.C."/>
            <person name="Glavina del Rio T."/>
            <person name="Hammon N."/>
            <person name="Israni S."/>
            <person name="Dalin E."/>
            <person name="Tice H."/>
            <person name="Pitluck S."/>
            <person name="Chain P."/>
            <person name="Malfatti S."/>
            <person name="Shin M."/>
            <person name="Vergez L."/>
            <person name="Schmutz J."/>
            <person name="Larimer F."/>
            <person name="Land M."/>
            <person name="Hauser L."/>
            <person name="Kyrpides N."/>
            <person name="Kim E."/>
            <person name="Tiedje J."/>
            <person name="Richardson P."/>
        </authorList>
    </citation>
    <scope>NUCLEOTIDE SEQUENCE [LARGE SCALE GENOMIC DNA]</scope>
    <source>
        <strain>PRwf-1</strain>
    </source>
</reference>
<comment type="function">
    <text evidence="1">DNA-dependent RNA polymerase catalyzes the transcription of DNA into RNA using the four ribonucleoside triphosphates as substrates.</text>
</comment>
<comment type="catalytic activity">
    <reaction evidence="1">
        <text>RNA(n) + a ribonucleoside 5'-triphosphate = RNA(n+1) + diphosphate</text>
        <dbReference type="Rhea" id="RHEA:21248"/>
        <dbReference type="Rhea" id="RHEA-COMP:14527"/>
        <dbReference type="Rhea" id="RHEA-COMP:17342"/>
        <dbReference type="ChEBI" id="CHEBI:33019"/>
        <dbReference type="ChEBI" id="CHEBI:61557"/>
        <dbReference type="ChEBI" id="CHEBI:140395"/>
        <dbReference type="EC" id="2.7.7.6"/>
    </reaction>
</comment>
<comment type="subunit">
    <text evidence="1">The RNAP catalytic core consists of 2 alpha, 1 beta, 1 beta' and 1 omega subunit. When a sigma factor is associated with the core the holoenzyme is formed, which can initiate transcription.</text>
</comment>
<comment type="similarity">
    <text evidence="1">Belongs to the RNA polymerase beta chain family.</text>
</comment>
<organism>
    <name type="scientific">Psychrobacter sp. (strain PRwf-1)</name>
    <dbReference type="NCBI Taxonomy" id="349106"/>
    <lineage>
        <taxon>Bacteria</taxon>
        <taxon>Pseudomonadati</taxon>
        <taxon>Pseudomonadota</taxon>
        <taxon>Gammaproteobacteria</taxon>
        <taxon>Moraxellales</taxon>
        <taxon>Moraxellaceae</taxon>
        <taxon>Psychrobacter</taxon>
    </lineage>
</organism>